<evidence type="ECO:0000255" key="1">
    <source>
        <dbReference type="HAMAP-Rule" id="MF_00260"/>
    </source>
</evidence>
<organism>
    <name type="scientific">Pseudomonas putida (strain GB-1)</name>
    <dbReference type="NCBI Taxonomy" id="76869"/>
    <lineage>
        <taxon>Bacteria</taxon>
        <taxon>Pseudomonadati</taxon>
        <taxon>Pseudomonadota</taxon>
        <taxon>Gammaproteobacteria</taxon>
        <taxon>Pseudomonadales</taxon>
        <taxon>Pseudomonadaceae</taxon>
        <taxon>Pseudomonas</taxon>
    </lineage>
</organism>
<sequence length="313" mass="33450">MSTREIRIATRKSALALWQAEYVKARLEQAHPGLLVTLVPMVSRGDKLLDAPLAKIGGKGLFVKELETALLDNEADIAVHSMKDVPMDFPEGLGLYCICEREDPRDAFVSNTFDSLEALPAGSIVGTSSLRRQAQLLARRPDLQIRFLRGNVNTRLAKLDAGEYDAIILAAAGLIRLGFEDRITSTISVDDSLPAGGQGAVGIECRSADVEIHALLAPLHHADTADRVVAERALNKHLNGGCQVPIACYAVLEGDQLWLRGLVGQPSGGTLLVADARAPRTAAETLGVQVAEDLLSQGAEAILKEVYGEAGHP</sequence>
<accession>B0KH05</accession>
<feature type="chain" id="PRO_1000078615" description="Porphobilinogen deaminase">
    <location>
        <begin position="1"/>
        <end position="313"/>
    </location>
</feature>
<feature type="modified residue" description="S-(dipyrrolylmethanemethyl)cysteine" evidence="1">
    <location>
        <position position="242"/>
    </location>
</feature>
<keyword id="KW-0627">Porphyrin biosynthesis</keyword>
<keyword id="KW-0808">Transferase</keyword>
<dbReference type="EC" id="2.5.1.61" evidence="1"/>
<dbReference type="EMBL" id="CP000926">
    <property type="protein sequence ID" value="ABY96124.1"/>
    <property type="molecule type" value="Genomic_DNA"/>
</dbReference>
<dbReference type="RefSeq" id="WP_012269994.1">
    <property type="nucleotide sequence ID" value="NC_010322.1"/>
</dbReference>
<dbReference type="SMR" id="B0KH05"/>
<dbReference type="KEGG" id="ppg:PputGB1_0211"/>
<dbReference type="eggNOG" id="COG0181">
    <property type="taxonomic scope" value="Bacteria"/>
</dbReference>
<dbReference type="HOGENOM" id="CLU_019704_0_2_6"/>
<dbReference type="UniPathway" id="UPA00251">
    <property type="reaction ID" value="UER00319"/>
</dbReference>
<dbReference type="Proteomes" id="UP000002157">
    <property type="component" value="Chromosome"/>
</dbReference>
<dbReference type="GO" id="GO:0005737">
    <property type="term" value="C:cytoplasm"/>
    <property type="evidence" value="ECO:0007669"/>
    <property type="project" value="TreeGrafter"/>
</dbReference>
<dbReference type="GO" id="GO:0004418">
    <property type="term" value="F:hydroxymethylbilane synthase activity"/>
    <property type="evidence" value="ECO:0007669"/>
    <property type="project" value="UniProtKB-UniRule"/>
</dbReference>
<dbReference type="GO" id="GO:0006782">
    <property type="term" value="P:protoporphyrinogen IX biosynthetic process"/>
    <property type="evidence" value="ECO:0007669"/>
    <property type="project" value="UniProtKB-UniRule"/>
</dbReference>
<dbReference type="CDD" id="cd13646">
    <property type="entry name" value="PBP2_EcHMBS_like"/>
    <property type="match status" value="1"/>
</dbReference>
<dbReference type="FunFam" id="3.30.160.40:FF:000002">
    <property type="entry name" value="Porphobilinogen deaminase"/>
    <property type="match status" value="1"/>
</dbReference>
<dbReference type="FunFam" id="3.40.190.10:FF:000004">
    <property type="entry name" value="Porphobilinogen deaminase"/>
    <property type="match status" value="1"/>
</dbReference>
<dbReference type="FunFam" id="3.40.190.10:FF:000005">
    <property type="entry name" value="Porphobilinogen deaminase"/>
    <property type="match status" value="1"/>
</dbReference>
<dbReference type="Gene3D" id="3.40.190.10">
    <property type="entry name" value="Periplasmic binding protein-like II"/>
    <property type="match status" value="2"/>
</dbReference>
<dbReference type="Gene3D" id="3.30.160.40">
    <property type="entry name" value="Porphobilinogen deaminase, C-terminal domain"/>
    <property type="match status" value="1"/>
</dbReference>
<dbReference type="HAMAP" id="MF_00260">
    <property type="entry name" value="Porphobil_deam"/>
    <property type="match status" value="1"/>
</dbReference>
<dbReference type="InterPro" id="IPR000860">
    <property type="entry name" value="HemC"/>
</dbReference>
<dbReference type="InterPro" id="IPR022419">
    <property type="entry name" value="Porphobilin_deaminase_cofac_BS"/>
</dbReference>
<dbReference type="InterPro" id="IPR022417">
    <property type="entry name" value="Porphobilin_deaminase_N"/>
</dbReference>
<dbReference type="InterPro" id="IPR022418">
    <property type="entry name" value="Porphobilinogen_deaminase_C"/>
</dbReference>
<dbReference type="InterPro" id="IPR036803">
    <property type="entry name" value="Porphobilinogen_deaminase_C_sf"/>
</dbReference>
<dbReference type="NCBIfam" id="TIGR00212">
    <property type="entry name" value="hemC"/>
    <property type="match status" value="1"/>
</dbReference>
<dbReference type="PANTHER" id="PTHR11557">
    <property type="entry name" value="PORPHOBILINOGEN DEAMINASE"/>
    <property type="match status" value="1"/>
</dbReference>
<dbReference type="PANTHER" id="PTHR11557:SF0">
    <property type="entry name" value="PORPHOBILINOGEN DEAMINASE"/>
    <property type="match status" value="1"/>
</dbReference>
<dbReference type="Pfam" id="PF01379">
    <property type="entry name" value="Porphobil_deam"/>
    <property type="match status" value="1"/>
</dbReference>
<dbReference type="Pfam" id="PF03900">
    <property type="entry name" value="Porphobil_deamC"/>
    <property type="match status" value="1"/>
</dbReference>
<dbReference type="PIRSF" id="PIRSF001438">
    <property type="entry name" value="4pyrrol_synth_OHMeBilane_synth"/>
    <property type="match status" value="1"/>
</dbReference>
<dbReference type="PRINTS" id="PR00151">
    <property type="entry name" value="PORPHBDMNASE"/>
</dbReference>
<dbReference type="SUPFAM" id="SSF53850">
    <property type="entry name" value="Periplasmic binding protein-like II"/>
    <property type="match status" value="1"/>
</dbReference>
<dbReference type="SUPFAM" id="SSF54782">
    <property type="entry name" value="Porphobilinogen deaminase (hydroxymethylbilane synthase), C-terminal domain"/>
    <property type="match status" value="1"/>
</dbReference>
<dbReference type="PROSITE" id="PS00533">
    <property type="entry name" value="PORPHOBILINOGEN_DEAM"/>
    <property type="match status" value="1"/>
</dbReference>
<protein>
    <recommendedName>
        <fullName evidence="1">Porphobilinogen deaminase</fullName>
        <shortName evidence="1">PBG</shortName>
        <ecNumber evidence="1">2.5.1.61</ecNumber>
    </recommendedName>
    <alternativeName>
        <fullName evidence="1">Hydroxymethylbilane synthase</fullName>
        <shortName evidence="1">HMBS</shortName>
    </alternativeName>
    <alternativeName>
        <fullName evidence="1">Pre-uroporphyrinogen synthase</fullName>
    </alternativeName>
</protein>
<reference key="1">
    <citation type="submission" date="2008-01" db="EMBL/GenBank/DDBJ databases">
        <title>Complete sequence of Pseudomonas putida GB-1.</title>
        <authorList>
            <consortium name="US DOE Joint Genome Institute"/>
            <person name="Copeland A."/>
            <person name="Lucas S."/>
            <person name="Lapidus A."/>
            <person name="Barry K."/>
            <person name="Glavina del Rio T."/>
            <person name="Dalin E."/>
            <person name="Tice H."/>
            <person name="Pitluck S."/>
            <person name="Bruce D."/>
            <person name="Goodwin L."/>
            <person name="Chertkov O."/>
            <person name="Brettin T."/>
            <person name="Detter J.C."/>
            <person name="Han C."/>
            <person name="Kuske C.R."/>
            <person name="Schmutz J."/>
            <person name="Larimer F."/>
            <person name="Land M."/>
            <person name="Hauser L."/>
            <person name="Kyrpides N."/>
            <person name="Kim E."/>
            <person name="McCarthy J.K."/>
            <person name="Richardson P."/>
        </authorList>
    </citation>
    <scope>NUCLEOTIDE SEQUENCE [LARGE SCALE GENOMIC DNA]</scope>
    <source>
        <strain>GB-1</strain>
    </source>
</reference>
<proteinExistence type="inferred from homology"/>
<gene>
    <name evidence="1" type="primary">hemC</name>
    <name type="ordered locus">PputGB1_0211</name>
</gene>
<comment type="function">
    <text evidence="1">Tetrapolymerization of the monopyrrole PBG into the hydroxymethylbilane pre-uroporphyrinogen in several discrete steps.</text>
</comment>
<comment type="catalytic activity">
    <reaction evidence="1">
        <text>4 porphobilinogen + H2O = hydroxymethylbilane + 4 NH4(+)</text>
        <dbReference type="Rhea" id="RHEA:13185"/>
        <dbReference type="ChEBI" id="CHEBI:15377"/>
        <dbReference type="ChEBI" id="CHEBI:28938"/>
        <dbReference type="ChEBI" id="CHEBI:57845"/>
        <dbReference type="ChEBI" id="CHEBI:58126"/>
        <dbReference type="EC" id="2.5.1.61"/>
    </reaction>
</comment>
<comment type="cofactor">
    <cofactor evidence="1">
        <name>dipyrromethane</name>
        <dbReference type="ChEBI" id="CHEBI:60342"/>
    </cofactor>
    <text evidence="1">Binds 1 dipyrromethane group covalently.</text>
</comment>
<comment type="pathway">
    <text evidence="1">Porphyrin-containing compound metabolism; protoporphyrin-IX biosynthesis; coproporphyrinogen-III from 5-aminolevulinate: step 2/4.</text>
</comment>
<comment type="subunit">
    <text evidence="1">Monomer.</text>
</comment>
<comment type="miscellaneous">
    <text evidence="1">The porphobilinogen subunits are added to the dipyrromethane group.</text>
</comment>
<comment type="similarity">
    <text evidence="1">Belongs to the HMBS family.</text>
</comment>
<name>HEM3_PSEPG</name>